<organism>
    <name type="scientific">Anaeromyxobacter dehalogenans (strain 2CP-1 / ATCC BAA-258)</name>
    <dbReference type="NCBI Taxonomy" id="455488"/>
    <lineage>
        <taxon>Bacteria</taxon>
        <taxon>Pseudomonadati</taxon>
        <taxon>Myxococcota</taxon>
        <taxon>Myxococcia</taxon>
        <taxon>Myxococcales</taxon>
        <taxon>Cystobacterineae</taxon>
        <taxon>Anaeromyxobacteraceae</taxon>
        <taxon>Anaeromyxobacter</taxon>
    </lineage>
</organism>
<evidence type="ECO:0000255" key="1">
    <source>
        <dbReference type="HAMAP-Rule" id="MF_00688"/>
    </source>
</evidence>
<sequence length="233" mass="25814">MPIFRLPREPAFPDPALAEPDGLLAVGGDLEPERLLTAYAEGIFPWFDAESPILWWSPDPRLVLDPAALHVPRSLQRTLRRGAYRVSADEAFERVIRRCAERDRPGQQGTWITGEMVDAYVRLHRLGVAHSFEAWEGDALAGGLYGVSLGAAFFGESMFADAPDASKVAFVRSVEWLRSAGVELVDCQVRTEHLVRFGAREIPRAEFLARLARALEQPTLRGRWQLGGAGPPS</sequence>
<protein>
    <recommendedName>
        <fullName evidence="1">Leucyl/phenylalanyl-tRNA--protein transferase</fullName>
        <ecNumber evidence="1">2.3.2.6</ecNumber>
    </recommendedName>
    <alternativeName>
        <fullName evidence="1">L/F-transferase</fullName>
    </alternativeName>
    <alternativeName>
        <fullName evidence="1">Leucyltransferase</fullName>
    </alternativeName>
    <alternativeName>
        <fullName evidence="1">Phenyalanyltransferase</fullName>
    </alternativeName>
</protein>
<keyword id="KW-0012">Acyltransferase</keyword>
<keyword id="KW-0963">Cytoplasm</keyword>
<keyword id="KW-0808">Transferase</keyword>
<gene>
    <name evidence="1" type="primary">aat</name>
    <name type="ordered locus">A2cp1_0844</name>
</gene>
<dbReference type="EC" id="2.3.2.6" evidence="1"/>
<dbReference type="EMBL" id="CP001359">
    <property type="protein sequence ID" value="ACL64196.1"/>
    <property type="molecule type" value="Genomic_DNA"/>
</dbReference>
<dbReference type="RefSeq" id="WP_012524903.1">
    <property type="nucleotide sequence ID" value="NC_011891.1"/>
</dbReference>
<dbReference type="SMR" id="B8JDV1"/>
<dbReference type="KEGG" id="acp:A2cp1_0844"/>
<dbReference type="HOGENOM" id="CLU_075045_0_0_7"/>
<dbReference type="Proteomes" id="UP000007089">
    <property type="component" value="Chromosome"/>
</dbReference>
<dbReference type="GO" id="GO:0005737">
    <property type="term" value="C:cytoplasm"/>
    <property type="evidence" value="ECO:0007669"/>
    <property type="project" value="UniProtKB-SubCell"/>
</dbReference>
<dbReference type="GO" id="GO:0008914">
    <property type="term" value="F:leucyl-tRNA--protein transferase activity"/>
    <property type="evidence" value="ECO:0007669"/>
    <property type="project" value="UniProtKB-UniRule"/>
</dbReference>
<dbReference type="GO" id="GO:0030163">
    <property type="term" value="P:protein catabolic process"/>
    <property type="evidence" value="ECO:0007669"/>
    <property type="project" value="UniProtKB-UniRule"/>
</dbReference>
<dbReference type="FunFam" id="3.30.70.3550:FF:000001">
    <property type="entry name" value="Leucyl/phenylalanyl-tRNA--protein transferase"/>
    <property type="match status" value="1"/>
</dbReference>
<dbReference type="FunFam" id="3.40.630.70:FF:000001">
    <property type="entry name" value="Leucyl/phenylalanyl-tRNA--protein transferase"/>
    <property type="match status" value="1"/>
</dbReference>
<dbReference type="Gene3D" id="3.40.630.70">
    <property type="entry name" value="Leucyl/phenylalanyl-tRNA-protein transferase, C-terminal domain"/>
    <property type="match status" value="1"/>
</dbReference>
<dbReference type="Gene3D" id="3.30.70.3550">
    <property type="entry name" value="Leucyl/phenylalanyl-tRNA-protein transferase, N-terminal domain"/>
    <property type="match status" value="1"/>
</dbReference>
<dbReference type="HAMAP" id="MF_00688">
    <property type="entry name" value="Leu_Phe_trans"/>
    <property type="match status" value="1"/>
</dbReference>
<dbReference type="InterPro" id="IPR016181">
    <property type="entry name" value="Acyl_CoA_acyltransferase"/>
</dbReference>
<dbReference type="InterPro" id="IPR004616">
    <property type="entry name" value="Leu/Phe-tRNA_Trfase"/>
</dbReference>
<dbReference type="InterPro" id="IPR042203">
    <property type="entry name" value="Leu/Phe-tRNA_Trfase_C"/>
</dbReference>
<dbReference type="InterPro" id="IPR042221">
    <property type="entry name" value="Leu/Phe-tRNA_Trfase_N"/>
</dbReference>
<dbReference type="NCBIfam" id="TIGR00667">
    <property type="entry name" value="aat"/>
    <property type="match status" value="1"/>
</dbReference>
<dbReference type="PANTHER" id="PTHR30098">
    <property type="entry name" value="LEUCYL/PHENYLALANYL-TRNA--PROTEIN TRANSFERASE"/>
    <property type="match status" value="1"/>
</dbReference>
<dbReference type="PANTHER" id="PTHR30098:SF2">
    <property type="entry name" value="LEUCYL_PHENYLALANYL-TRNA--PROTEIN TRANSFERASE"/>
    <property type="match status" value="1"/>
</dbReference>
<dbReference type="Pfam" id="PF03588">
    <property type="entry name" value="Leu_Phe_trans"/>
    <property type="match status" value="1"/>
</dbReference>
<dbReference type="SUPFAM" id="SSF55729">
    <property type="entry name" value="Acyl-CoA N-acyltransferases (Nat)"/>
    <property type="match status" value="1"/>
</dbReference>
<feature type="chain" id="PRO_1000147785" description="Leucyl/phenylalanyl-tRNA--protein transferase">
    <location>
        <begin position="1"/>
        <end position="233"/>
    </location>
</feature>
<proteinExistence type="inferred from homology"/>
<reference key="1">
    <citation type="submission" date="2009-01" db="EMBL/GenBank/DDBJ databases">
        <title>Complete sequence of Anaeromyxobacter dehalogenans 2CP-1.</title>
        <authorList>
            <person name="Lucas S."/>
            <person name="Copeland A."/>
            <person name="Lapidus A."/>
            <person name="Glavina del Rio T."/>
            <person name="Dalin E."/>
            <person name="Tice H."/>
            <person name="Bruce D."/>
            <person name="Goodwin L."/>
            <person name="Pitluck S."/>
            <person name="Saunders E."/>
            <person name="Brettin T."/>
            <person name="Detter J.C."/>
            <person name="Han C."/>
            <person name="Larimer F."/>
            <person name="Land M."/>
            <person name="Hauser L."/>
            <person name="Kyrpides N."/>
            <person name="Ovchinnikova G."/>
            <person name="Beliaev A.S."/>
            <person name="Richardson P."/>
        </authorList>
    </citation>
    <scope>NUCLEOTIDE SEQUENCE [LARGE SCALE GENOMIC DNA]</scope>
    <source>
        <strain>2CP-1 / ATCC BAA-258</strain>
    </source>
</reference>
<comment type="function">
    <text evidence="1">Functions in the N-end rule pathway of protein degradation where it conjugates Leu, Phe and, less efficiently, Met from aminoacyl-tRNAs to the N-termini of proteins containing an N-terminal arginine or lysine.</text>
</comment>
<comment type="catalytic activity">
    <reaction evidence="1">
        <text>N-terminal L-lysyl-[protein] + L-leucyl-tRNA(Leu) = N-terminal L-leucyl-L-lysyl-[protein] + tRNA(Leu) + H(+)</text>
        <dbReference type="Rhea" id="RHEA:12340"/>
        <dbReference type="Rhea" id="RHEA-COMP:9613"/>
        <dbReference type="Rhea" id="RHEA-COMP:9622"/>
        <dbReference type="Rhea" id="RHEA-COMP:12670"/>
        <dbReference type="Rhea" id="RHEA-COMP:12671"/>
        <dbReference type="ChEBI" id="CHEBI:15378"/>
        <dbReference type="ChEBI" id="CHEBI:65249"/>
        <dbReference type="ChEBI" id="CHEBI:78442"/>
        <dbReference type="ChEBI" id="CHEBI:78494"/>
        <dbReference type="ChEBI" id="CHEBI:133043"/>
        <dbReference type="EC" id="2.3.2.6"/>
    </reaction>
</comment>
<comment type="catalytic activity">
    <reaction evidence="1">
        <text>N-terminal L-arginyl-[protein] + L-leucyl-tRNA(Leu) = N-terminal L-leucyl-L-arginyl-[protein] + tRNA(Leu) + H(+)</text>
        <dbReference type="Rhea" id="RHEA:50416"/>
        <dbReference type="Rhea" id="RHEA-COMP:9613"/>
        <dbReference type="Rhea" id="RHEA-COMP:9622"/>
        <dbReference type="Rhea" id="RHEA-COMP:12672"/>
        <dbReference type="Rhea" id="RHEA-COMP:12673"/>
        <dbReference type="ChEBI" id="CHEBI:15378"/>
        <dbReference type="ChEBI" id="CHEBI:64719"/>
        <dbReference type="ChEBI" id="CHEBI:78442"/>
        <dbReference type="ChEBI" id="CHEBI:78494"/>
        <dbReference type="ChEBI" id="CHEBI:133044"/>
        <dbReference type="EC" id="2.3.2.6"/>
    </reaction>
</comment>
<comment type="catalytic activity">
    <reaction evidence="1">
        <text>L-phenylalanyl-tRNA(Phe) + an N-terminal L-alpha-aminoacyl-[protein] = an N-terminal L-phenylalanyl-L-alpha-aminoacyl-[protein] + tRNA(Phe)</text>
        <dbReference type="Rhea" id="RHEA:43632"/>
        <dbReference type="Rhea" id="RHEA-COMP:9668"/>
        <dbReference type="Rhea" id="RHEA-COMP:9699"/>
        <dbReference type="Rhea" id="RHEA-COMP:10636"/>
        <dbReference type="Rhea" id="RHEA-COMP:10637"/>
        <dbReference type="ChEBI" id="CHEBI:78442"/>
        <dbReference type="ChEBI" id="CHEBI:78531"/>
        <dbReference type="ChEBI" id="CHEBI:78597"/>
        <dbReference type="ChEBI" id="CHEBI:83561"/>
        <dbReference type="EC" id="2.3.2.6"/>
    </reaction>
</comment>
<comment type="subcellular location">
    <subcellularLocation>
        <location evidence="1">Cytoplasm</location>
    </subcellularLocation>
</comment>
<comment type="similarity">
    <text evidence="1">Belongs to the L/F-transferase family.</text>
</comment>
<name>LFTR_ANAD2</name>
<accession>B8JDV1</accession>